<comment type="function">
    <text evidence="1">Redox regulated molecular chaperone. Protects both thermally unfolding and oxidatively damaged proteins from irreversible aggregation. Plays an important role in the bacterial defense system toward oxidative stress.</text>
</comment>
<comment type="subcellular location">
    <subcellularLocation>
        <location evidence="1">Cytoplasm</location>
    </subcellularLocation>
</comment>
<comment type="PTM">
    <text evidence="1">Under oxidizing conditions two disulfide bonds are formed involving the reactive cysteines. Under reducing conditions zinc is bound to the reactive cysteines and the protein is inactive.</text>
</comment>
<comment type="similarity">
    <text evidence="1">Belongs to the HSP33 family.</text>
</comment>
<proteinExistence type="inferred from homology"/>
<gene>
    <name evidence="1" type="primary">hslO</name>
    <name type="ordered locus">SynRCC307_1447</name>
</gene>
<keyword id="KW-0143">Chaperone</keyword>
<keyword id="KW-0963">Cytoplasm</keyword>
<keyword id="KW-1015">Disulfide bond</keyword>
<keyword id="KW-0676">Redox-active center</keyword>
<keyword id="KW-1185">Reference proteome</keyword>
<keyword id="KW-0862">Zinc</keyword>
<accession>A5GTZ1</accession>
<name>HSLO_SYNR3</name>
<reference key="1">
    <citation type="submission" date="2006-05" db="EMBL/GenBank/DDBJ databases">
        <authorList>
            <consortium name="Genoscope"/>
        </authorList>
    </citation>
    <scope>NUCLEOTIDE SEQUENCE [LARGE SCALE GENOMIC DNA]</scope>
    <source>
        <strain>RCC307</strain>
    </source>
</reference>
<evidence type="ECO:0000255" key="1">
    <source>
        <dbReference type="HAMAP-Rule" id="MF_00117"/>
    </source>
</evidence>
<sequence>MADRLVRAMAAGGGIRLVAVTTTETTRMARERHQLSFLASALLGRAMTAGLLLASSMKVAHGRVTLRTQSDGLLKGLSVDAGRDGRVRGYVGNPSLELDLVGDPASFDFKQALGTGYLNVMRDEGQGPPYSSTVELVSGCIGEDVASYLLHSEQTPSAVFVGEHIDSSGIRCSGGVLVQVLPKAAREPALVALLEDRCREITGFSQRLEACQGDLHSLLRDVFPDLDPEVLADEQAEQPVEFFCPCTRERSRGALALLGAEELADMIEKDNGAELTCHFCGEVYRFSGEDLAALIEALPRSA</sequence>
<feature type="chain" id="PRO_1000015588" description="33 kDa chaperonin">
    <location>
        <begin position="1"/>
        <end position="302"/>
    </location>
</feature>
<feature type="disulfide bond" description="Redox-active" evidence="1">
    <location>
        <begin position="244"/>
        <end position="246"/>
    </location>
</feature>
<feature type="disulfide bond" description="Redox-active" evidence="1">
    <location>
        <begin position="277"/>
        <end position="280"/>
    </location>
</feature>
<organism>
    <name type="scientific">Synechococcus sp. (strain RCC307)</name>
    <dbReference type="NCBI Taxonomy" id="316278"/>
    <lineage>
        <taxon>Bacteria</taxon>
        <taxon>Bacillati</taxon>
        <taxon>Cyanobacteriota</taxon>
        <taxon>Cyanophyceae</taxon>
        <taxon>Synechococcales</taxon>
        <taxon>Synechococcaceae</taxon>
        <taxon>Synechococcus</taxon>
    </lineage>
</organism>
<dbReference type="EMBL" id="CT978603">
    <property type="protein sequence ID" value="CAK28350.1"/>
    <property type="molecule type" value="Genomic_DNA"/>
</dbReference>
<dbReference type="SMR" id="A5GTZ1"/>
<dbReference type="STRING" id="316278.SynRCC307_1447"/>
<dbReference type="KEGG" id="syr:SynRCC307_1447"/>
<dbReference type="eggNOG" id="COG1281">
    <property type="taxonomic scope" value="Bacteria"/>
</dbReference>
<dbReference type="HOGENOM" id="CLU_054493_1_0_3"/>
<dbReference type="OrthoDB" id="9776534at2"/>
<dbReference type="Proteomes" id="UP000001115">
    <property type="component" value="Chromosome"/>
</dbReference>
<dbReference type="GO" id="GO:0005737">
    <property type="term" value="C:cytoplasm"/>
    <property type="evidence" value="ECO:0007669"/>
    <property type="project" value="UniProtKB-SubCell"/>
</dbReference>
<dbReference type="GO" id="GO:0044183">
    <property type="term" value="F:protein folding chaperone"/>
    <property type="evidence" value="ECO:0007669"/>
    <property type="project" value="TreeGrafter"/>
</dbReference>
<dbReference type="GO" id="GO:0051082">
    <property type="term" value="F:unfolded protein binding"/>
    <property type="evidence" value="ECO:0007669"/>
    <property type="project" value="UniProtKB-UniRule"/>
</dbReference>
<dbReference type="GO" id="GO:0042026">
    <property type="term" value="P:protein refolding"/>
    <property type="evidence" value="ECO:0007669"/>
    <property type="project" value="TreeGrafter"/>
</dbReference>
<dbReference type="CDD" id="cd00498">
    <property type="entry name" value="Hsp33"/>
    <property type="match status" value="1"/>
</dbReference>
<dbReference type="Gene3D" id="3.55.30.10">
    <property type="entry name" value="Hsp33 domain"/>
    <property type="match status" value="1"/>
</dbReference>
<dbReference type="Gene3D" id="3.90.1280.10">
    <property type="entry name" value="HSP33 redox switch-like"/>
    <property type="match status" value="1"/>
</dbReference>
<dbReference type="HAMAP" id="MF_00117">
    <property type="entry name" value="HslO"/>
    <property type="match status" value="1"/>
</dbReference>
<dbReference type="InterPro" id="IPR000397">
    <property type="entry name" value="Heat_shock_Hsp33"/>
</dbReference>
<dbReference type="InterPro" id="IPR016154">
    <property type="entry name" value="Heat_shock_Hsp33_C"/>
</dbReference>
<dbReference type="InterPro" id="IPR016153">
    <property type="entry name" value="Heat_shock_Hsp33_N"/>
</dbReference>
<dbReference type="NCBIfam" id="NF001033">
    <property type="entry name" value="PRK00114.1"/>
    <property type="match status" value="1"/>
</dbReference>
<dbReference type="PANTHER" id="PTHR30111">
    <property type="entry name" value="33 KDA CHAPERONIN"/>
    <property type="match status" value="1"/>
</dbReference>
<dbReference type="PANTHER" id="PTHR30111:SF1">
    <property type="entry name" value="33 KDA CHAPERONIN"/>
    <property type="match status" value="1"/>
</dbReference>
<dbReference type="Pfam" id="PF01430">
    <property type="entry name" value="HSP33"/>
    <property type="match status" value="1"/>
</dbReference>
<dbReference type="PIRSF" id="PIRSF005261">
    <property type="entry name" value="Heat_shock_Hsp33"/>
    <property type="match status" value="1"/>
</dbReference>
<dbReference type="SUPFAM" id="SSF64397">
    <property type="entry name" value="Hsp33 domain"/>
    <property type="match status" value="1"/>
</dbReference>
<dbReference type="SUPFAM" id="SSF118352">
    <property type="entry name" value="HSP33 redox switch-like"/>
    <property type="match status" value="1"/>
</dbReference>
<protein>
    <recommendedName>
        <fullName evidence="1">33 kDa chaperonin</fullName>
    </recommendedName>
    <alternativeName>
        <fullName evidence="1">Heat shock protein 33 homolog</fullName>
        <shortName evidence="1">HSP33</shortName>
    </alternativeName>
</protein>